<name>EOMES_MOUSE</name>
<feature type="chain" id="PRO_0000184460" description="Eomesodermin homolog">
    <location>
        <begin position="1"/>
        <end position="707"/>
    </location>
</feature>
<feature type="DNA-binding region" description="T-box" evidence="2">
    <location>
        <begin position="278"/>
        <end position="458"/>
    </location>
</feature>
<feature type="region of interest" description="Disordered" evidence="3">
    <location>
        <begin position="27"/>
        <end position="125"/>
    </location>
</feature>
<feature type="region of interest" description="Required for transcription activation" evidence="1">
    <location>
        <begin position="592"/>
        <end position="707"/>
    </location>
</feature>
<feature type="region of interest" description="Disordered" evidence="3">
    <location>
        <begin position="642"/>
        <end position="689"/>
    </location>
</feature>
<feature type="compositionally biased region" description="Gly residues" evidence="3">
    <location>
        <begin position="27"/>
        <end position="42"/>
    </location>
</feature>
<feature type="compositionally biased region" description="Low complexity" evidence="3">
    <location>
        <begin position="73"/>
        <end position="93"/>
    </location>
</feature>
<feature type="compositionally biased region" description="Polar residues" evidence="3">
    <location>
        <begin position="648"/>
        <end position="657"/>
    </location>
</feature>
<feature type="compositionally biased region" description="Low complexity" evidence="3">
    <location>
        <begin position="667"/>
        <end position="678"/>
    </location>
</feature>
<feature type="compositionally biased region" description="Basic and acidic residues" evidence="3">
    <location>
        <begin position="680"/>
        <end position="689"/>
    </location>
</feature>
<feature type="modified residue" description="Phosphoserine" evidence="11">
    <location>
        <position position="117"/>
    </location>
</feature>
<feature type="modified residue" description="Phosphothreonine" evidence="11">
    <location>
        <position position="473"/>
    </location>
</feature>
<feature type="splice variant" id="VSP_038806" description="In isoform 2." evidence="9">
    <location>
        <begin position="463"/>
        <end position="481"/>
    </location>
</feature>
<feature type="sequence conflict" description="In Ref. 3; BAC40968." evidence="10" ref="3">
    <original>E</original>
    <variation>D</variation>
    <location>
        <position position="144"/>
    </location>
</feature>
<feature type="sequence conflict" description="In Ref. 3; BAC40968." evidence="10" ref="3">
    <original>A</original>
    <variation>T</variation>
    <location>
        <position position="159"/>
    </location>
</feature>
<feature type="sequence conflict" description="In Ref. 1; BAA83416." evidence="10" ref="1">
    <original>V</original>
    <variation>G</variation>
    <location>
        <position position="178"/>
    </location>
</feature>
<keyword id="KW-0010">Activator</keyword>
<keyword id="KW-1064">Adaptive immunity</keyword>
<keyword id="KW-0025">Alternative splicing</keyword>
<keyword id="KW-0217">Developmental protein</keyword>
<keyword id="KW-0221">Differentiation</keyword>
<keyword id="KW-0238">DNA-binding</keyword>
<keyword id="KW-0306">Gastrulation</keyword>
<keyword id="KW-0391">Immunity</keyword>
<keyword id="KW-0539">Nucleus</keyword>
<keyword id="KW-0597">Phosphoprotein</keyword>
<keyword id="KW-1185">Reference proteome</keyword>
<keyword id="KW-0804">Transcription</keyword>
<keyword id="KW-0805">Transcription regulation</keyword>
<reference key="1">
    <citation type="journal article" date="1999" name="Brain Res. Dev. Brain Res.">
        <title>A novel mammalian T-box-containing gene, Tbr2, expressed in mouse developing brain.</title>
        <authorList>
            <person name="Kimura N."/>
            <person name="Nakashima K."/>
            <person name="Ueno M."/>
            <person name="Taga T."/>
        </authorList>
    </citation>
    <scope>NUCLEOTIDE SEQUENCE [MRNA] (ISOFORM 2)</scope>
    <source>
        <tissue>Brain</tissue>
    </source>
</reference>
<reference key="2">
    <citation type="journal article" date="2000" name="Gene">
        <title>Genomic organization, sequence and chromosomal localization of the mouse Tbr2 gene and a comparative study with Tbr1.</title>
        <authorList>
            <person name="Ueno M."/>
            <person name="Kimura N."/>
            <person name="Nakashima K."/>
            <person name="Saito-Ohara F."/>
            <person name="Inazawa J."/>
            <person name="Taga T."/>
        </authorList>
    </citation>
    <scope>NUCLEOTIDE SEQUENCE [GENOMIC DNA]</scope>
    <scope>ALTERNATIVE SPLICING (ISOFORM 2)</scope>
    <source>
        <strain>129/Sv</strain>
        <tissue>Liver</tissue>
    </source>
</reference>
<reference key="3">
    <citation type="journal article" date="2005" name="Science">
        <title>The transcriptional landscape of the mammalian genome.</title>
        <authorList>
            <person name="Carninci P."/>
            <person name="Kasukawa T."/>
            <person name="Katayama S."/>
            <person name="Gough J."/>
            <person name="Frith M.C."/>
            <person name="Maeda N."/>
            <person name="Oyama R."/>
            <person name="Ravasi T."/>
            <person name="Lenhard B."/>
            <person name="Wells C."/>
            <person name="Kodzius R."/>
            <person name="Shimokawa K."/>
            <person name="Bajic V.B."/>
            <person name="Brenner S.E."/>
            <person name="Batalov S."/>
            <person name="Forrest A.R."/>
            <person name="Zavolan M."/>
            <person name="Davis M.J."/>
            <person name="Wilming L.G."/>
            <person name="Aidinis V."/>
            <person name="Allen J.E."/>
            <person name="Ambesi-Impiombato A."/>
            <person name="Apweiler R."/>
            <person name="Aturaliya R.N."/>
            <person name="Bailey T.L."/>
            <person name="Bansal M."/>
            <person name="Baxter L."/>
            <person name="Beisel K.W."/>
            <person name="Bersano T."/>
            <person name="Bono H."/>
            <person name="Chalk A.M."/>
            <person name="Chiu K.P."/>
            <person name="Choudhary V."/>
            <person name="Christoffels A."/>
            <person name="Clutterbuck D.R."/>
            <person name="Crowe M.L."/>
            <person name="Dalla E."/>
            <person name="Dalrymple B.P."/>
            <person name="de Bono B."/>
            <person name="Della Gatta G."/>
            <person name="di Bernardo D."/>
            <person name="Down T."/>
            <person name="Engstrom P."/>
            <person name="Fagiolini M."/>
            <person name="Faulkner G."/>
            <person name="Fletcher C.F."/>
            <person name="Fukushima T."/>
            <person name="Furuno M."/>
            <person name="Futaki S."/>
            <person name="Gariboldi M."/>
            <person name="Georgii-Hemming P."/>
            <person name="Gingeras T.R."/>
            <person name="Gojobori T."/>
            <person name="Green R.E."/>
            <person name="Gustincich S."/>
            <person name="Harbers M."/>
            <person name="Hayashi Y."/>
            <person name="Hensch T.K."/>
            <person name="Hirokawa N."/>
            <person name="Hill D."/>
            <person name="Huminiecki L."/>
            <person name="Iacono M."/>
            <person name="Ikeo K."/>
            <person name="Iwama A."/>
            <person name="Ishikawa T."/>
            <person name="Jakt M."/>
            <person name="Kanapin A."/>
            <person name="Katoh M."/>
            <person name="Kawasawa Y."/>
            <person name="Kelso J."/>
            <person name="Kitamura H."/>
            <person name="Kitano H."/>
            <person name="Kollias G."/>
            <person name="Krishnan S.P."/>
            <person name="Kruger A."/>
            <person name="Kummerfeld S.K."/>
            <person name="Kurochkin I.V."/>
            <person name="Lareau L.F."/>
            <person name="Lazarevic D."/>
            <person name="Lipovich L."/>
            <person name="Liu J."/>
            <person name="Liuni S."/>
            <person name="McWilliam S."/>
            <person name="Madan Babu M."/>
            <person name="Madera M."/>
            <person name="Marchionni L."/>
            <person name="Matsuda H."/>
            <person name="Matsuzawa S."/>
            <person name="Miki H."/>
            <person name="Mignone F."/>
            <person name="Miyake S."/>
            <person name="Morris K."/>
            <person name="Mottagui-Tabar S."/>
            <person name="Mulder N."/>
            <person name="Nakano N."/>
            <person name="Nakauchi H."/>
            <person name="Ng P."/>
            <person name="Nilsson R."/>
            <person name="Nishiguchi S."/>
            <person name="Nishikawa S."/>
            <person name="Nori F."/>
            <person name="Ohara O."/>
            <person name="Okazaki Y."/>
            <person name="Orlando V."/>
            <person name="Pang K.C."/>
            <person name="Pavan W.J."/>
            <person name="Pavesi G."/>
            <person name="Pesole G."/>
            <person name="Petrovsky N."/>
            <person name="Piazza S."/>
            <person name="Reed J."/>
            <person name="Reid J.F."/>
            <person name="Ring B.Z."/>
            <person name="Ringwald M."/>
            <person name="Rost B."/>
            <person name="Ruan Y."/>
            <person name="Salzberg S.L."/>
            <person name="Sandelin A."/>
            <person name="Schneider C."/>
            <person name="Schoenbach C."/>
            <person name="Sekiguchi K."/>
            <person name="Semple C.A."/>
            <person name="Seno S."/>
            <person name="Sessa L."/>
            <person name="Sheng Y."/>
            <person name="Shibata Y."/>
            <person name="Shimada H."/>
            <person name="Shimada K."/>
            <person name="Silva D."/>
            <person name="Sinclair B."/>
            <person name="Sperling S."/>
            <person name="Stupka E."/>
            <person name="Sugiura K."/>
            <person name="Sultana R."/>
            <person name="Takenaka Y."/>
            <person name="Taki K."/>
            <person name="Tammoja K."/>
            <person name="Tan S.L."/>
            <person name="Tang S."/>
            <person name="Taylor M.S."/>
            <person name="Tegner J."/>
            <person name="Teichmann S.A."/>
            <person name="Ueda H.R."/>
            <person name="van Nimwegen E."/>
            <person name="Verardo R."/>
            <person name="Wei C.L."/>
            <person name="Yagi K."/>
            <person name="Yamanishi H."/>
            <person name="Zabarovsky E."/>
            <person name="Zhu S."/>
            <person name="Zimmer A."/>
            <person name="Hide W."/>
            <person name="Bult C."/>
            <person name="Grimmond S.M."/>
            <person name="Teasdale R.D."/>
            <person name="Liu E.T."/>
            <person name="Brusic V."/>
            <person name="Quackenbush J."/>
            <person name="Wahlestedt C."/>
            <person name="Mattick J.S."/>
            <person name="Hume D.A."/>
            <person name="Kai C."/>
            <person name="Sasaki D."/>
            <person name="Tomaru Y."/>
            <person name="Fukuda S."/>
            <person name="Kanamori-Katayama M."/>
            <person name="Suzuki M."/>
            <person name="Aoki J."/>
            <person name="Arakawa T."/>
            <person name="Iida J."/>
            <person name="Imamura K."/>
            <person name="Itoh M."/>
            <person name="Kato T."/>
            <person name="Kawaji H."/>
            <person name="Kawagashira N."/>
            <person name="Kawashima T."/>
            <person name="Kojima M."/>
            <person name="Kondo S."/>
            <person name="Konno H."/>
            <person name="Nakano K."/>
            <person name="Ninomiya N."/>
            <person name="Nishio T."/>
            <person name="Okada M."/>
            <person name="Plessy C."/>
            <person name="Shibata K."/>
            <person name="Shiraki T."/>
            <person name="Suzuki S."/>
            <person name="Tagami M."/>
            <person name="Waki K."/>
            <person name="Watahiki A."/>
            <person name="Okamura-Oho Y."/>
            <person name="Suzuki H."/>
            <person name="Kawai J."/>
            <person name="Hayashizaki Y."/>
        </authorList>
    </citation>
    <scope>NUCLEOTIDE SEQUENCE [LARGE SCALE MRNA] (ISOFORM 1)</scope>
    <source>
        <strain>C57BL/6J</strain>
        <strain>NOD</strain>
        <tissue>Olfactory bulb</tissue>
        <tissue>Spleen</tissue>
    </source>
</reference>
<reference key="4">
    <citation type="journal article" date="2009" name="PLoS Biol.">
        <title>Lineage-specific biology revealed by a finished genome assembly of the mouse.</title>
        <authorList>
            <person name="Church D.M."/>
            <person name="Goodstadt L."/>
            <person name="Hillier L.W."/>
            <person name="Zody M.C."/>
            <person name="Goldstein S."/>
            <person name="She X."/>
            <person name="Bult C.J."/>
            <person name="Agarwala R."/>
            <person name="Cherry J.L."/>
            <person name="DiCuccio M."/>
            <person name="Hlavina W."/>
            <person name="Kapustin Y."/>
            <person name="Meric P."/>
            <person name="Maglott D."/>
            <person name="Birtle Z."/>
            <person name="Marques A.C."/>
            <person name="Graves T."/>
            <person name="Zhou S."/>
            <person name="Teague B."/>
            <person name="Potamousis K."/>
            <person name="Churas C."/>
            <person name="Place M."/>
            <person name="Herschleb J."/>
            <person name="Runnheim R."/>
            <person name="Forrest D."/>
            <person name="Amos-Landgraf J."/>
            <person name="Schwartz D.C."/>
            <person name="Cheng Z."/>
            <person name="Lindblad-Toh K."/>
            <person name="Eichler E.E."/>
            <person name="Ponting C.P."/>
        </authorList>
    </citation>
    <scope>NUCLEOTIDE SEQUENCE [LARGE SCALE GENOMIC DNA]</scope>
    <source>
        <strain>C57BL/6J</strain>
    </source>
</reference>
<reference key="5">
    <citation type="journal article" date="2004" name="Genome Res.">
        <title>The status, quality, and expansion of the NIH full-length cDNA project: the Mammalian Gene Collection (MGC).</title>
        <authorList>
            <consortium name="The MGC Project Team"/>
        </authorList>
    </citation>
    <scope>NUCLEOTIDE SEQUENCE [LARGE SCALE MRNA] (ISOFORM 1)</scope>
    <source>
        <strain>C57BL/6J</strain>
        <tissue>Brain</tissue>
    </source>
</reference>
<reference key="6">
    <citation type="journal article" date="1998" name="Genomics">
        <title>A combined analysis of genomic and primary protein structure defines the phylogenetic relationship of new members of the T-box family.</title>
        <authorList>
            <person name="Wattler S."/>
            <person name="Russ A."/>
            <person name="Evans M."/>
            <person name="Nehls M."/>
        </authorList>
    </citation>
    <scope>NUCLEOTIDE SEQUENCE [MRNA] OF 278-457</scope>
</reference>
<reference key="7">
    <citation type="journal article" date="2000" name="Nature">
        <title>Eomesodermin is required for mouse trophoblast development and mesoderm formation.</title>
        <authorList>
            <person name="Russ A.P."/>
            <person name="Wattler S."/>
            <person name="Colledge W.H."/>
            <person name="Aparicio S.A.J.R."/>
            <person name="Carlton M.B.L."/>
            <person name="Pearce J.J."/>
            <person name="Barton S.C."/>
            <person name="Surani M.A."/>
            <person name="Ryan K."/>
            <person name="Nehls M.C."/>
            <person name="Wilson V."/>
            <person name="Evans M.J."/>
        </authorList>
    </citation>
    <scope>FUNCTION IN TROPHOBLAST DIFFERENTIATION</scope>
    <scope>FUNCTION IN GASTRULATION</scope>
    <scope>DISRUPTION PHENOTYPE</scope>
    <scope>DEVELOPMENTAL STAGE</scope>
</reference>
<reference key="8">
    <citation type="journal article" date="2003" name="Science">
        <title>Control of effector CD8+ T cell function by the transcription factor Eomesodermin.</title>
        <authorList>
            <person name="Pearce E.L."/>
            <person name="Mullen A.C."/>
            <person name="Martins G.A."/>
            <person name="Krawczyk C.M."/>
            <person name="Hutchins A.S."/>
            <person name="Zediak V.P."/>
            <person name="Banica M."/>
            <person name="DiCioccio C.B."/>
            <person name="Gross D.A."/>
            <person name="Mao C.-A."/>
            <person name="Shen H."/>
            <person name="Cereb N."/>
            <person name="Yang S.Y."/>
            <person name="Lindsten T."/>
            <person name="Rossant J."/>
            <person name="Hunter C.A."/>
            <person name="Reiner S.L."/>
        </authorList>
    </citation>
    <scope>FUNCTION</scope>
    <scope>TISSUE SPECIFICITY</scope>
    <scope>INDUCTION</scope>
</reference>
<reference key="9">
    <citation type="journal article" date="2008" name="Development">
        <title>Pivotal roles for eomesodermin during axis formation, epithelium-to-mesenchyme transition and endoderm specification in the mouse.</title>
        <authorList>
            <person name="Arnold S.J."/>
            <person name="Hofmann U.K."/>
            <person name="Bikoff E.K."/>
            <person name="Robertson E.J."/>
        </authorList>
    </citation>
    <scope>FUNCTION IN GASTRULATION</scope>
</reference>
<reference key="10">
    <citation type="journal article" date="2008" name="Neuron">
        <title>Tbr2 directs conversion of radial glia into basal precursors and guides neuronal amplification by indirect neurogenesis in the developing neocortex.</title>
        <authorList>
            <person name="Sessa A."/>
            <person name="Mao C.-A."/>
            <person name="Hadjantonakis A.-K."/>
            <person name="Klein W.H."/>
            <person name="Broccoli V."/>
        </authorList>
    </citation>
    <scope>FUNCTION</scope>
    <scope>DEVELOPMENTAL STAGE</scope>
</reference>
<reference key="11">
    <citation type="journal article" date="2010" name="Cell">
        <title>A tissue-specific atlas of mouse protein phosphorylation and expression.</title>
        <authorList>
            <person name="Huttlin E.L."/>
            <person name="Jedrychowski M.P."/>
            <person name="Elias J.E."/>
            <person name="Goswami T."/>
            <person name="Rad R."/>
            <person name="Beausoleil S.A."/>
            <person name="Villen J."/>
            <person name="Haas W."/>
            <person name="Sowa M.E."/>
            <person name="Gygi S.P."/>
        </authorList>
    </citation>
    <scope>PHOSPHORYLATION [LARGE SCALE ANALYSIS] AT SER-117 AND THR-473</scope>
    <scope>IDENTIFICATION BY MASS SPECTROMETRY [LARGE SCALE ANALYSIS]</scope>
    <source>
        <tissue>Brain</tissue>
        <tissue>Spleen</tissue>
    </source>
</reference>
<reference key="12">
    <citation type="journal article" date="2020" name="Front. Neurosci.">
        <title>Unipolar (Dendritic) Brush Cells Are Morphologically Complex and Require Tbr2 for Differentiation and Migration.</title>
        <authorList>
            <person name="McDonough A."/>
            <person name="Elsen G.E."/>
            <person name="Daza R.M."/>
            <person name="Bachleda A.R."/>
            <person name="Pizzo D."/>
            <person name="DelleTorri O.M."/>
            <person name="Hevner R.F."/>
        </authorList>
    </citation>
    <scope>FUNCTION</scope>
</reference>
<evidence type="ECO:0000250" key="1"/>
<evidence type="ECO:0000255" key="2">
    <source>
        <dbReference type="PROSITE-ProRule" id="PRU00201"/>
    </source>
</evidence>
<evidence type="ECO:0000256" key="3">
    <source>
        <dbReference type="SAM" id="MobiDB-lite"/>
    </source>
</evidence>
<evidence type="ECO:0000269" key="4">
    <source>
    </source>
</evidence>
<evidence type="ECO:0000269" key="5">
    <source>
    </source>
</evidence>
<evidence type="ECO:0000269" key="6">
    <source>
    </source>
</evidence>
<evidence type="ECO:0000269" key="7">
    <source>
    </source>
</evidence>
<evidence type="ECO:0000269" key="8">
    <source>
    </source>
</evidence>
<evidence type="ECO:0000303" key="9">
    <source>
    </source>
</evidence>
<evidence type="ECO:0000305" key="10"/>
<evidence type="ECO:0007744" key="11">
    <source>
    </source>
</evidence>
<dbReference type="EMBL" id="AB031037">
    <property type="protein sequence ID" value="BAA83416.1"/>
    <property type="molecule type" value="mRNA"/>
</dbReference>
<dbReference type="EMBL" id="AB032373">
    <property type="protein sequence ID" value="BAB07808.1"/>
    <property type="molecule type" value="Genomic_DNA"/>
</dbReference>
<dbReference type="EMBL" id="AK089817">
    <property type="protein sequence ID" value="BAC40968.1"/>
    <property type="molecule type" value="mRNA"/>
</dbReference>
<dbReference type="EMBL" id="AK143454">
    <property type="protein sequence ID" value="BAE25384.1"/>
    <property type="molecule type" value="mRNA"/>
</dbReference>
<dbReference type="EMBL" id="AC173340">
    <property type="status" value="NOT_ANNOTATED_CDS"/>
    <property type="molecule type" value="Genomic_DNA"/>
</dbReference>
<dbReference type="EMBL" id="BC094319">
    <property type="protein sequence ID" value="AAH94319.1"/>
    <property type="molecule type" value="mRNA"/>
</dbReference>
<dbReference type="EMBL" id="AF013281">
    <property type="protein sequence ID" value="AAC16233.1"/>
    <property type="molecule type" value="mRNA"/>
</dbReference>
<dbReference type="CCDS" id="CCDS23603.1">
    <molecule id="O54839-1"/>
</dbReference>
<dbReference type="CCDS" id="CCDS52960.1">
    <molecule id="O54839-2"/>
</dbReference>
<dbReference type="RefSeq" id="NP_001158261.1">
    <molecule id="O54839-2"/>
    <property type="nucleotide sequence ID" value="NM_001164789.2"/>
</dbReference>
<dbReference type="RefSeq" id="NP_034266.2">
    <molecule id="O54839-1"/>
    <property type="nucleotide sequence ID" value="NM_010136.4"/>
</dbReference>
<dbReference type="SMR" id="O54839"/>
<dbReference type="BioGRID" id="199457">
    <property type="interactions" value="3"/>
</dbReference>
<dbReference type="FunCoup" id="O54839">
    <property type="interactions" value="1579"/>
</dbReference>
<dbReference type="IntAct" id="O54839">
    <property type="interactions" value="1"/>
</dbReference>
<dbReference type="STRING" id="10090.ENSMUSP00000035020"/>
<dbReference type="GlyGen" id="O54839">
    <property type="glycosylation" value="1 site"/>
</dbReference>
<dbReference type="iPTMnet" id="O54839"/>
<dbReference type="PhosphoSitePlus" id="O54839"/>
<dbReference type="PaxDb" id="10090-ENSMUSP00000035020"/>
<dbReference type="PeptideAtlas" id="O54839"/>
<dbReference type="ProteomicsDB" id="277880">
    <molecule id="O54839-1"/>
</dbReference>
<dbReference type="ProteomicsDB" id="277881">
    <molecule id="O54839-2"/>
</dbReference>
<dbReference type="Antibodypedia" id="11523">
    <property type="antibodies" value="448 antibodies from 40 providers"/>
</dbReference>
<dbReference type="DNASU" id="13813"/>
<dbReference type="Ensembl" id="ENSMUST00000035020.15">
    <molecule id="O54839-1"/>
    <property type="protein sequence ID" value="ENSMUSP00000035020.9"/>
    <property type="gene ID" value="ENSMUSG00000032446.15"/>
</dbReference>
<dbReference type="Ensembl" id="ENSMUST00000111763.8">
    <molecule id="O54839-2"/>
    <property type="protein sequence ID" value="ENSMUSP00000107393.2"/>
    <property type="gene ID" value="ENSMUSG00000032446.15"/>
</dbReference>
<dbReference type="GeneID" id="13813"/>
<dbReference type="KEGG" id="mmu:13813"/>
<dbReference type="UCSC" id="uc009rzo.2">
    <molecule id="O54839-1"/>
    <property type="organism name" value="mouse"/>
</dbReference>
<dbReference type="UCSC" id="uc009rzp.2">
    <molecule id="O54839-2"/>
    <property type="organism name" value="mouse"/>
</dbReference>
<dbReference type="AGR" id="MGI:1201683"/>
<dbReference type="CTD" id="8320"/>
<dbReference type="MGI" id="MGI:1201683">
    <property type="gene designation" value="Eomes"/>
</dbReference>
<dbReference type="VEuPathDB" id="HostDB:ENSMUSG00000032446"/>
<dbReference type="eggNOG" id="KOG3585">
    <property type="taxonomic scope" value="Eukaryota"/>
</dbReference>
<dbReference type="GeneTree" id="ENSGT00940000158728"/>
<dbReference type="HOGENOM" id="CLU_014430_8_1_1"/>
<dbReference type="InParanoid" id="O54839"/>
<dbReference type="OMA" id="LYNPYPP"/>
<dbReference type="OrthoDB" id="7442607at2759"/>
<dbReference type="PhylomeDB" id="O54839"/>
<dbReference type="TreeFam" id="TF106341"/>
<dbReference type="BioGRID-ORCS" id="13813">
    <property type="hits" value="2 hits in 80 CRISPR screens"/>
</dbReference>
<dbReference type="ChiTaRS" id="Eomes">
    <property type="organism name" value="mouse"/>
</dbReference>
<dbReference type="PRO" id="PR:O54839"/>
<dbReference type="Proteomes" id="UP000000589">
    <property type="component" value="Chromosome 9"/>
</dbReference>
<dbReference type="RNAct" id="O54839">
    <property type="molecule type" value="protein"/>
</dbReference>
<dbReference type="Bgee" id="ENSMUSG00000032446">
    <property type="expression patterns" value="Expressed in ventricular zone and 102 other cell types or tissues"/>
</dbReference>
<dbReference type="ExpressionAtlas" id="O54839">
    <property type="expression patterns" value="baseline and differential"/>
</dbReference>
<dbReference type="GO" id="GO:0000785">
    <property type="term" value="C:chromatin"/>
    <property type="evidence" value="ECO:0000314"/>
    <property type="project" value="BHF-UCL"/>
</dbReference>
<dbReference type="GO" id="GO:0005654">
    <property type="term" value="C:nucleoplasm"/>
    <property type="evidence" value="ECO:0000304"/>
    <property type="project" value="Reactome"/>
</dbReference>
<dbReference type="GO" id="GO:0005634">
    <property type="term" value="C:nucleus"/>
    <property type="evidence" value="ECO:0000314"/>
    <property type="project" value="MGI"/>
</dbReference>
<dbReference type="GO" id="GO:0003682">
    <property type="term" value="F:chromatin binding"/>
    <property type="evidence" value="ECO:0000314"/>
    <property type="project" value="MGI"/>
</dbReference>
<dbReference type="GO" id="GO:0031490">
    <property type="term" value="F:chromatin DNA binding"/>
    <property type="evidence" value="ECO:0000314"/>
    <property type="project" value="MGI"/>
</dbReference>
<dbReference type="GO" id="GO:0003677">
    <property type="term" value="F:DNA binding"/>
    <property type="evidence" value="ECO:0000250"/>
    <property type="project" value="UniProtKB"/>
</dbReference>
<dbReference type="GO" id="GO:0003700">
    <property type="term" value="F:DNA-binding transcription factor activity"/>
    <property type="evidence" value="ECO:0000304"/>
    <property type="project" value="MGI"/>
</dbReference>
<dbReference type="GO" id="GO:0001227">
    <property type="term" value="F:DNA-binding transcription repressor activity, RNA polymerase II-specific"/>
    <property type="evidence" value="ECO:0000305"/>
    <property type="project" value="NTNU_SB"/>
</dbReference>
<dbReference type="GO" id="GO:0000978">
    <property type="term" value="F:RNA polymerase II cis-regulatory region sequence-specific DNA binding"/>
    <property type="evidence" value="ECO:0007669"/>
    <property type="project" value="InterPro"/>
</dbReference>
<dbReference type="GO" id="GO:0000977">
    <property type="term" value="F:RNA polymerase II transcription regulatory region sequence-specific DNA binding"/>
    <property type="evidence" value="ECO:0000314"/>
    <property type="project" value="MGI"/>
</dbReference>
<dbReference type="GO" id="GO:0061629">
    <property type="term" value="F:RNA polymerase II-specific DNA-binding transcription factor binding"/>
    <property type="evidence" value="ECO:0000353"/>
    <property type="project" value="BHF-UCL"/>
</dbReference>
<dbReference type="GO" id="GO:0043565">
    <property type="term" value="F:sequence-specific DNA binding"/>
    <property type="evidence" value="ECO:0000266"/>
    <property type="project" value="MGI"/>
</dbReference>
<dbReference type="GO" id="GO:0003714">
    <property type="term" value="F:transcription corepressor activity"/>
    <property type="evidence" value="ECO:0000314"/>
    <property type="project" value="BHF-UCL"/>
</dbReference>
<dbReference type="GO" id="GO:0002250">
    <property type="term" value="P:adaptive immune response"/>
    <property type="evidence" value="ECO:0007669"/>
    <property type="project" value="UniProtKB-KW"/>
</dbReference>
<dbReference type="GO" id="GO:0009653">
    <property type="term" value="P:anatomical structure morphogenesis"/>
    <property type="evidence" value="ECO:0000315"/>
    <property type="project" value="MGI"/>
</dbReference>
<dbReference type="GO" id="GO:0048708">
    <property type="term" value="P:astrocyte differentiation"/>
    <property type="evidence" value="ECO:0000315"/>
    <property type="project" value="MGI"/>
</dbReference>
<dbReference type="GO" id="GO:0001824">
    <property type="term" value="P:blastocyst development"/>
    <property type="evidence" value="ECO:0000315"/>
    <property type="project" value="MGI"/>
</dbReference>
<dbReference type="GO" id="GO:0010002">
    <property type="term" value="P:cardioblast differentiation"/>
    <property type="evidence" value="ECO:0000315"/>
    <property type="project" value="MGI"/>
</dbReference>
<dbReference type="GO" id="GO:0002302">
    <property type="term" value="P:CD8-positive, alpha-beta T cell differentiation involved in immune response"/>
    <property type="evidence" value="ECO:0000314"/>
    <property type="project" value="UniProtKB"/>
</dbReference>
<dbReference type="GO" id="GO:0030154">
    <property type="term" value="P:cell differentiation"/>
    <property type="evidence" value="ECO:0000315"/>
    <property type="project" value="MGI"/>
</dbReference>
<dbReference type="GO" id="GO:0060706">
    <property type="term" value="P:cell differentiation involved in embryonic placenta development"/>
    <property type="evidence" value="ECO:0000315"/>
    <property type="project" value="UniProtKB"/>
</dbReference>
<dbReference type="GO" id="GO:0021987">
    <property type="term" value="P:cerebral cortex development"/>
    <property type="evidence" value="ECO:0000315"/>
    <property type="project" value="MGI"/>
</dbReference>
<dbReference type="GO" id="GO:0021895">
    <property type="term" value="P:cerebral cortex neuron differentiation"/>
    <property type="evidence" value="ECO:0000314"/>
    <property type="project" value="UniProtKB"/>
</dbReference>
<dbReference type="GO" id="GO:0021796">
    <property type="term" value="P:cerebral cortex regionalization"/>
    <property type="evidence" value="ECO:0000315"/>
    <property type="project" value="MGI"/>
</dbReference>
<dbReference type="GO" id="GO:0006338">
    <property type="term" value="P:chromatin remodeling"/>
    <property type="evidence" value="ECO:0000315"/>
    <property type="project" value="MGI"/>
</dbReference>
<dbReference type="GO" id="GO:0007492">
    <property type="term" value="P:endoderm development"/>
    <property type="evidence" value="ECO:0000315"/>
    <property type="project" value="MGI"/>
</dbReference>
<dbReference type="GO" id="GO:0001706">
    <property type="term" value="P:endoderm formation"/>
    <property type="evidence" value="ECO:0000315"/>
    <property type="project" value="UniProtKB"/>
</dbReference>
<dbReference type="GO" id="GO:0001714">
    <property type="term" value="P:endodermal cell fate specification"/>
    <property type="evidence" value="ECO:0000315"/>
    <property type="project" value="MGI"/>
</dbReference>
<dbReference type="GO" id="GO:0010467">
    <property type="term" value="P:gene expression"/>
    <property type="evidence" value="ECO:0000315"/>
    <property type="project" value="MGI"/>
</dbReference>
<dbReference type="GO" id="GO:0048382">
    <property type="term" value="P:mesendoderm development"/>
    <property type="evidence" value="ECO:0000315"/>
    <property type="project" value="MGI"/>
</dbReference>
<dbReference type="GO" id="GO:0001707">
    <property type="term" value="P:mesoderm formation"/>
    <property type="evidence" value="ECO:0000315"/>
    <property type="project" value="UniProtKB"/>
</dbReference>
<dbReference type="GO" id="GO:0060809">
    <property type="term" value="P:mesodermal to mesenchymal transition involved in gastrulation"/>
    <property type="evidence" value="ECO:0000315"/>
    <property type="project" value="UniProtKB"/>
</dbReference>
<dbReference type="GO" id="GO:0000122">
    <property type="term" value="P:negative regulation of transcription by RNA polymerase II"/>
    <property type="evidence" value="ECO:0000314"/>
    <property type="project" value="BHF-UCL"/>
</dbReference>
<dbReference type="GO" id="GO:0022008">
    <property type="term" value="P:neurogenesis"/>
    <property type="evidence" value="ECO:0000315"/>
    <property type="project" value="MGI"/>
</dbReference>
<dbReference type="GO" id="GO:0030182">
    <property type="term" value="P:neuron differentiation"/>
    <property type="evidence" value="ECO:0000315"/>
    <property type="project" value="MGI"/>
</dbReference>
<dbReference type="GO" id="GO:0001764">
    <property type="term" value="P:neuron migration"/>
    <property type="evidence" value="ECO:0000315"/>
    <property type="project" value="MGI"/>
</dbReference>
<dbReference type="GO" id="GO:0021772">
    <property type="term" value="P:olfactory bulb development"/>
    <property type="evidence" value="ECO:0000315"/>
    <property type="project" value="MGI"/>
</dbReference>
<dbReference type="GO" id="GO:0045893">
    <property type="term" value="P:positive regulation of DNA-templated transcription"/>
    <property type="evidence" value="ECO:0000250"/>
    <property type="project" value="UniProtKB"/>
</dbReference>
<dbReference type="GO" id="GO:0045944">
    <property type="term" value="P:positive regulation of transcription by RNA polymerase II"/>
    <property type="evidence" value="ECO:0000315"/>
    <property type="project" value="MGI"/>
</dbReference>
<dbReference type="GO" id="GO:0010468">
    <property type="term" value="P:regulation of gene expression"/>
    <property type="evidence" value="ECO:0000315"/>
    <property type="project" value="MGI"/>
</dbReference>
<dbReference type="GO" id="GO:0006357">
    <property type="term" value="P:regulation of transcription by RNA polymerase II"/>
    <property type="evidence" value="ECO:0000314"/>
    <property type="project" value="MGI"/>
</dbReference>
<dbReference type="GO" id="GO:0035914">
    <property type="term" value="P:skeletal muscle cell differentiation"/>
    <property type="evidence" value="ECO:0000315"/>
    <property type="project" value="MGI"/>
</dbReference>
<dbReference type="GO" id="GO:0019827">
    <property type="term" value="P:stem cell population maintenance"/>
    <property type="evidence" value="ECO:0000315"/>
    <property type="project" value="MGI"/>
</dbReference>
<dbReference type="GO" id="GO:0001829">
    <property type="term" value="P:trophectodermal cell differentiation"/>
    <property type="evidence" value="ECO:0000314"/>
    <property type="project" value="MGI"/>
</dbReference>
<dbReference type="CDD" id="cd20205">
    <property type="entry name" value="T-box_TBR2"/>
    <property type="match status" value="1"/>
</dbReference>
<dbReference type="FunFam" id="2.60.40.820:FF:000004">
    <property type="entry name" value="T-box, brain 1"/>
    <property type="match status" value="1"/>
</dbReference>
<dbReference type="Gene3D" id="2.60.40.820">
    <property type="entry name" value="Transcription factor, T-box"/>
    <property type="match status" value="1"/>
</dbReference>
<dbReference type="InterPro" id="IPR008967">
    <property type="entry name" value="p53-like_TF_DNA-bd_sf"/>
</dbReference>
<dbReference type="InterPro" id="IPR032385">
    <property type="entry name" value="T-box_assoc"/>
</dbReference>
<dbReference type="InterPro" id="IPR046360">
    <property type="entry name" value="T-box_DNA-bd"/>
</dbReference>
<dbReference type="InterPro" id="IPR036960">
    <property type="entry name" value="T-box_sf"/>
</dbReference>
<dbReference type="InterPro" id="IPR001699">
    <property type="entry name" value="TF_T-box"/>
</dbReference>
<dbReference type="InterPro" id="IPR018186">
    <property type="entry name" value="TF_T-box_CS"/>
</dbReference>
<dbReference type="PANTHER" id="PTHR11267:SF13">
    <property type="entry name" value="EOMESODERMIN HOMOLOG"/>
    <property type="match status" value="1"/>
</dbReference>
<dbReference type="PANTHER" id="PTHR11267">
    <property type="entry name" value="T-BOX PROTEIN-RELATED"/>
    <property type="match status" value="1"/>
</dbReference>
<dbReference type="Pfam" id="PF00907">
    <property type="entry name" value="T-box"/>
    <property type="match status" value="1"/>
</dbReference>
<dbReference type="Pfam" id="PF16176">
    <property type="entry name" value="T-box_assoc"/>
    <property type="match status" value="1"/>
</dbReference>
<dbReference type="PRINTS" id="PR00937">
    <property type="entry name" value="TBOX"/>
</dbReference>
<dbReference type="SMART" id="SM00425">
    <property type="entry name" value="TBOX"/>
    <property type="match status" value="1"/>
</dbReference>
<dbReference type="SUPFAM" id="SSF49417">
    <property type="entry name" value="p53-like transcription factors"/>
    <property type="match status" value="1"/>
</dbReference>
<dbReference type="PROSITE" id="PS01283">
    <property type="entry name" value="TBOX_1"/>
    <property type="match status" value="1"/>
</dbReference>
<dbReference type="PROSITE" id="PS01264">
    <property type="entry name" value="TBOX_2"/>
    <property type="match status" value="1"/>
</dbReference>
<dbReference type="PROSITE" id="PS50252">
    <property type="entry name" value="TBOX_3"/>
    <property type="match status" value="1"/>
</dbReference>
<comment type="function">
    <text evidence="4 5 6 7 8">Functions as a transcriptional activator playing a crucial role during development. Functions in trophoblast differentiation and later in gastrulation, regulating both mesoderm delamination and endoderm specification (PubMed:10716450). Plays a role in brain development being required for the specification and the proliferation of the intermediate progenitor cells and their progeny in the cerebral cortex (PubMed:18171685, PubMed:18940588). Required for differentiation and migration of unipolar dendritic brush cells (PubMed:33488348). Also involved in the differentiation of CD8+ T-cells during immune response regulating the expression of lytic effector genes (PubMed:14605368).</text>
</comment>
<comment type="subcellular location">
    <subcellularLocation>
        <location evidence="10">Nucleus</location>
    </subcellularLocation>
</comment>
<comment type="alternative products">
    <event type="alternative splicing"/>
    <isoform>
        <id>O54839-1</id>
        <name>1</name>
        <sequence type="displayed"/>
    </isoform>
    <isoform>
        <id>O54839-2</id>
        <name>2</name>
        <sequence type="described" ref="VSP_038806"/>
    </isoform>
</comment>
<comment type="tissue specificity">
    <text evidence="5">Expressed in CD8+ T-cells.</text>
</comment>
<comment type="developmental stage">
    <text evidence="4 7">Originally expressed in the trophoectoderm of the blastocyst and later in the extraembryonic ectoderm of the early post-implantation embryo. In the embryo proper, expressed in the posterior part of the epiblast. During gastrulation, extends distally into the primitive streak and nascent mesoderm. Also expressed in the developing forebrain and the olfactory lobes. Expressed at 12.5 dpc and 14.5 dpc in the forebrain.</text>
</comment>
<comment type="induction">
    <text evidence="5">Up-regulated in CD8+ T-cells upon activation.</text>
</comment>
<comment type="disruption phenotype">
    <text evidence="4">Embryonic lethal due to peri-implantation defects. Mutant embryos arrest soon after implantation and fail to form organized embryonic or extraembryonic structures. Conditional mutants, with expression abrogated in the inner cell mass of embryos from early implantation stages onward, display gastrulation defects.</text>
</comment>
<gene>
    <name type="primary">Eomes</name>
    <name type="synonym">Tbr2</name>
</gene>
<protein>
    <recommendedName>
        <fullName>Eomesodermin homolog</fullName>
    </recommendedName>
    <alternativeName>
        <fullName>T-box brain protein 2</fullName>
        <shortName>T-brain-2</shortName>
        <shortName>TBR-2</shortName>
    </alternativeName>
</protein>
<accession>O54839</accession>
<accession>Q3UPL1</accession>
<accession>Q52KJ1</accession>
<accession>Q8BN22</accession>
<accession>Q9JJL1</accession>
<accession>Q9QYG7</accession>
<proteinExistence type="evidence at protein level"/>
<sequence>MQLGEQLLVSSVNLPGAHFYSLESARGGGGGGGGGGGGGGGSVSLLPGAAPSPQRLDLDKASKKFPGSLPCQAGSAEPAGAGAGAPAAMLSDADAGDTFGSTSAVAKPGPPDGRKGSPCAEEELPSAATAAATARYSMDSLSSERYYLPSPGPQGSELAAPCSLFQYPAAAGAAHGPVYPASNGARYPYGSMLPPGGFPAAVCPPARAQFGPAAGSGSGAGSSGGGAGGPGAYPYGQGSPLYGPYAGTSAAGSCGGLGGLGVPGSGFRAHVYLCNRPLWLKFHRHQTEMIITKQGRRMFPFLSFNINGLNPTAHYNVFVEVVLADPNHWRFQGGKWVTCGKADNNMQGNKMYVHPESPNTGSHWMRQEISFGKLKLTNNKGANNNNTQMIVLQSLHKYQPRLHIVEVTEDGVEDLNEPSKTQTFTFSETQFIAVTAYQNTDITQLKIDHNPFAKGFRDNYDSMYTASENDRLTPSPTDSPRSHQIVPGGRYGVQNFFPEPFVNTLPQARYYNGERTVPQTNGLLSPQQSEEVANPPQRWLVTPVQQPVTNKLDIGSYESEYTSSTLLPYGIKSLPLQTSHALGYYPDPTFPAMAGWGGRGAYQRKMAAGLPWTSRMSPPVFPEDQLAKEKVKEEISSSWIETPPSIKSLDSSDSGVYNSACKRKRLSPSTPSNGNSPPIKCEDINTEEYSKDTSKGMGAYYAFYTSP</sequence>
<organism>
    <name type="scientific">Mus musculus</name>
    <name type="common">Mouse</name>
    <dbReference type="NCBI Taxonomy" id="10090"/>
    <lineage>
        <taxon>Eukaryota</taxon>
        <taxon>Metazoa</taxon>
        <taxon>Chordata</taxon>
        <taxon>Craniata</taxon>
        <taxon>Vertebrata</taxon>
        <taxon>Euteleostomi</taxon>
        <taxon>Mammalia</taxon>
        <taxon>Eutheria</taxon>
        <taxon>Euarchontoglires</taxon>
        <taxon>Glires</taxon>
        <taxon>Rodentia</taxon>
        <taxon>Myomorpha</taxon>
        <taxon>Muroidea</taxon>
        <taxon>Muridae</taxon>
        <taxon>Murinae</taxon>
        <taxon>Mus</taxon>
        <taxon>Mus</taxon>
    </lineage>
</organism>